<feature type="initiator methionine" description="Removed" evidence="2">
    <location>
        <position position="1"/>
    </location>
</feature>
<feature type="chain" id="PRO_0000118788" description="NADH dehydrogenase [ubiquinone] 1 alpha subcomplex subunit 2">
    <location>
        <begin position="2"/>
        <end position="99"/>
    </location>
</feature>
<feature type="modified residue" description="N-acetylalanine" evidence="2">
    <location>
        <position position="2"/>
    </location>
</feature>
<feature type="modified residue" description="N6-acetyllysine; alternate" evidence="3">
    <location>
        <position position="64"/>
    </location>
</feature>
<feature type="modified residue" description="N6-succinyllysine; alternate" evidence="3">
    <location>
        <position position="64"/>
    </location>
</feature>
<feature type="modified residue" description="N6-acetyllysine" evidence="3">
    <location>
        <position position="75"/>
    </location>
</feature>
<feature type="disulfide bond" description="Redox-active" evidence="1">
    <location>
        <begin position="24"/>
        <end position="58"/>
    </location>
</feature>
<feature type="sequence conflict" description="In Ref. 2; ABC02172." evidence="6" ref="2">
    <original>L</original>
    <variation>V</variation>
    <location>
        <position position="44"/>
    </location>
</feature>
<feature type="strand" evidence="10">
    <location>
        <begin position="16"/>
        <end position="23"/>
    </location>
</feature>
<feature type="helix" evidence="10">
    <location>
        <begin position="28"/>
        <end position="30"/>
    </location>
</feature>
<feature type="helix" evidence="10">
    <location>
        <begin position="31"/>
        <end position="47"/>
    </location>
</feature>
<feature type="strand" evidence="9">
    <location>
        <begin position="48"/>
        <end position="51"/>
    </location>
</feature>
<feature type="strand" evidence="10">
    <location>
        <begin position="53"/>
        <end position="57"/>
    </location>
</feature>
<feature type="strand" evidence="10">
    <location>
        <begin position="64"/>
        <end position="69"/>
    </location>
</feature>
<feature type="helix" evidence="10">
    <location>
        <begin position="70"/>
        <end position="72"/>
    </location>
</feature>
<feature type="strand" evidence="10">
    <location>
        <begin position="74"/>
        <end position="78"/>
    </location>
</feature>
<feature type="helix" evidence="10">
    <location>
        <begin position="84"/>
        <end position="96"/>
    </location>
</feature>
<protein>
    <recommendedName>
        <fullName>NADH dehydrogenase [ubiquinone] 1 alpha subcomplex subunit 2</fullName>
    </recommendedName>
    <alternativeName>
        <fullName>Complex I-B8</fullName>
        <shortName>CI-B8</shortName>
    </alternativeName>
    <alternativeName>
        <fullName>NADH-ubiquinone oxidoreductase B8 subunit</fullName>
    </alternativeName>
</protein>
<keyword id="KW-0002">3D-structure</keyword>
<keyword id="KW-0007">Acetylation</keyword>
<keyword id="KW-0903">Direct protein sequencing</keyword>
<keyword id="KW-1015">Disulfide bond</keyword>
<keyword id="KW-0249">Electron transport</keyword>
<keyword id="KW-0472">Membrane</keyword>
<keyword id="KW-0496">Mitochondrion</keyword>
<keyword id="KW-0999">Mitochondrion inner membrane</keyword>
<keyword id="KW-1185">Reference proteome</keyword>
<keyword id="KW-0679">Respiratory chain</keyword>
<keyword id="KW-0813">Transport</keyword>
<organism>
    <name type="scientific">Bos taurus</name>
    <name type="common">Bovine</name>
    <dbReference type="NCBI Taxonomy" id="9913"/>
    <lineage>
        <taxon>Eukaryota</taxon>
        <taxon>Metazoa</taxon>
        <taxon>Chordata</taxon>
        <taxon>Craniata</taxon>
        <taxon>Vertebrata</taxon>
        <taxon>Euteleostomi</taxon>
        <taxon>Mammalia</taxon>
        <taxon>Eutheria</taxon>
        <taxon>Laurasiatheria</taxon>
        <taxon>Artiodactyla</taxon>
        <taxon>Ruminantia</taxon>
        <taxon>Pecora</taxon>
        <taxon>Bovidae</taxon>
        <taxon>Bovinae</taxon>
        <taxon>Bos</taxon>
    </lineage>
</organism>
<reference key="1">
    <citation type="journal article" date="1992" name="J. Mol. Biol.">
        <title>Sequences of 20 subunits of NADH:ubiquinone oxidoreductase from bovine heart mitochondria. Application of a novel strategy for sequencing proteins using the polymerase chain reaction.</title>
        <authorList>
            <person name="Walker J.E."/>
            <person name="Arizmendi J.M."/>
            <person name="Dupuis A."/>
            <person name="Fearnley I.M."/>
            <person name="Finel M."/>
            <person name="Medd S.M."/>
            <person name="Pilkington S.J."/>
            <person name="Runswick M.J."/>
            <person name="Skehel J.M."/>
        </authorList>
    </citation>
    <scope>NUCLEOTIDE SEQUENCE [MRNA]</scope>
    <scope>PROTEIN SEQUENCE OF 40-45; 47-61 AND 63-68</scope>
    <source>
        <tissue>Heart</tissue>
    </source>
</reference>
<reference key="2">
    <citation type="submission" date="2005-12" db="EMBL/GenBank/DDBJ databases">
        <title>Genomic sequencing of the T cell receptor alpha locus.</title>
        <authorList>
            <person name="Conrad M.L."/>
            <person name="Mawer M.A."/>
            <person name="Davis S.K."/>
            <person name="Koop B.F."/>
        </authorList>
    </citation>
    <scope>NUCLEOTIDE SEQUENCE [GENOMIC DNA]</scope>
</reference>
<reference key="3">
    <citation type="submission" date="2006-06" db="EMBL/GenBank/DDBJ databases">
        <authorList>
            <consortium name="NIH - Mammalian Gene Collection (MGC) project"/>
        </authorList>
    </citation>
    <scope>NUCLEOTIDE SEQUENCE [LARGE SCALE MRNA]</scope>
    <source>
        <strain>Hereford</strain>
        <tissue>Fetal cerebellum</tissue>
    </source>
</reference>
<reference key="4">
    <citation type="journal article" date="2000" name="Biochemistry">
        <title>Resolution of the membrane domain of bovine complex I into subcomplexes: implications for the structural organization of the enzyme.</title>
        <authorList>
            <person name="Sazanov L.A."/>
            <person name="Peak-Chew S.Y."/>
            <person name="Fearnley I.M."/>
            <person name="Walker J.E."/>
        </authorList>
    </citation>
    <scope>PARTIAL PROTEIN SEQUENCE</scope>
    <scope>SUBUNIT</scope>
    <scope>IDENTIFICATION IN COMPLEX I</scope>
    <scope>SUBCELLULAR LOCATION</scope>
</reference>
<reference key="5">
    <citation type="journal article" date="2008" name="Anal. Biochem.">
        <title>Subunit analysis of bovine heart complex I by reversed-phase high-performance liquid chromatography, electrospray ionization-tandem mass spectrometry, and matrix-assisted laser desorption/ionization-time-of-flight mass spectrometry.</title>
        <authorList>
            <person name="Lemma-Gray P."/>
            <person name="Valusova E."/>
            <person name="Carroll C.A."/>
            <person name="Weintraub S.T."/>
            <person name="Musatov A."/>
            <person name="Robinson N.C."/>
        </authorList>
    </citation>
    <scope>SUBUNIT</scope>
    <scope>IDENTIFICATION IN COMPLEX I</scope>
    <scope>SUBCELLULAR LOCATION</scope>
</reference>
<proteinExistence type="evidence at protein level"/>
<name>NDUA2_BOVIN</name>
<gene>
    <name type="primary">NDUFA2</name>
</gene>
<evidence type="ECO:0000250" key="1"/>
<evidence type="ECO:0000250" key="2">
    <source>
        <dbReference type="UniProtKB" id="O43678"/>
    </source>
</evidence>
<evidence type="ECO:0000250" key="3">
    <source>
        <dbReference type="UniProtKB" id="Q9CQ75"/>
    </source>
</evidence>
<evidence type="ECO:0000269" key="4">
    <source>
    </source>
</evidence>
<evidence type="ECO:0000269" key="5">
    <source>
    </source>
</evidence>
<evidence type="ECO:0000305" key="6"/>
<evidence type="ECO:0000305" key="7">
    <source>
    </source>
</evidence>
<evidence type="ECO:0000305" key="8">
    <source>
    </source>
</evidence>
<evidence type="ECO:0007829" key="9">
    <source>
        <dbReference type="PDB" id="7QSK"/>
    </source>
</evidence>
<evidence type="ECO:0007829" key="10">
    <source>
        <dbReference type="PDB" id="7QSM"/>
    </source>
</evidence>
<sequence>MAAAAAIRGVRGKLGLREIRIHLCQRSPGSQGVRDFIEKRYVELKKANPDLPILIRECSDVQPKLWARYAFGQEKNVSLNNFSADQVTRALENVLSSKA</sequence>
<dbReference type="EMBL" id="X63219">
    <property type="protein sequence ID" value="CAA44904.1"/>
    <property type="molecule type" value="mRNA"/>
</dbReference>
<dbReference type="EMBL" id="AY227782">
    <property type="protein sequence ID" value="ABC02172.1"/>
    <property type="molecule type" value="Genomic_DNA"/>
</dbReference>
<dbReference type="EMBL" id="BC118428">
    <property type="protein sequence ID" value="AAI18429.1"/>
    <property type="molecule type" value="mRNA"/>
</dbReference>
<dbReference type="PIR" id="S28249">
    <property type="entry name" value="S28249"/>
</dbReference>
<dbReference type="RefSeq" id="NP_787009.1">
    <property type="nucleotide sequence ID" value="NM_175815.2"/>
</dbReference>
<dbReference type="PDB" id="5LC5">
    <property type="method" value="EM"/>
    <property type="resolution" value="4.35 A"/>
    <property type="chains" value="S=17-96"/>
</dbReference>
<dbReference type="PDB" id="5LDW">
    <property type="method" value="EM"/>
    <property type="resolution" value="4.27 A"/>
    <property type="chains" value="S=1-99"/>
</dbReference>
<dbReference type="PDB" id="5LDX">
    <property type="method" value="EM"/>
    <property type="resolution" value="5.60 A"/>
    <property type="chains" value="S=1-99"/>
</dbReference>
<dbReference type="PDB" id="5O31">
    <property type="method" value="EM"/>
    <property type="resolution" value="4.13 A"/>
    <property type="chains" value="S=2-99"/>
</dbReference>
<dbReference type="PDB" id="7DGQ">
    <property type="method" value="EM"/>
    <property type="resolution" value="5.00 A"/>
    <property type="chains" value="K=2-99"/>
</dbReference>
<dbReference type="PDB" id="7DGR">
    <property type="method" value="EM"/>
    <property type="resolution" value="4.60 A"/>
    <property type="chains" value="K=2-99"/>
</dbReference>
<dbReference type="PDB" id="7DGS">
    <property type="method" value="EM"/>
    <property type="resolution" value="7.80 A"/>
    <property type="chains" value="K=2-99"/>
</dbReference>
<dbReference type="PDB" id="7DGZ">
    <property type="method" value="EM"/>
    <property type="resolution" value="3.80 A"/>
    <property type="chains" value="K=2-99"/>
</dbReference>
<dbReference type="PDB" id="7DH0">
    <property type="method" value="EM"/>
    <property type="resolution" value="4.20 A"/>
    <property type="chains" value="K=2-99"/>
</dbReference>
<dbReference type="PDB" id="7DKF">
    <property type="method" value="EM"/>
    <property type="resolution" value="8.30 A"/>
    <property type="chains" value="K2=2-99"/>
</dbReference>
<dbReference type="PDB" id="7QSD">
    <property type="method" value="EM"/>
    <property type="resolution" value="3.10 A"/>
    <property type="chains" value="S=1-99"/>
</dbReference>
<dbReference type="PDB" id="7QSK">
    <property type="method" value="EM"/>
    <property type="resolution" value="2.84 A"/>
    <property type="chains" value="S=1-99"/>
</dbReference>
<dbReference type="PDB" id="7QSL">
    <property type="method" value="EM"/>
    <property type="resolution" value="2.76 A"/>
    <property type="chains" value="S=1-99"/>
</dbReference>
<dbReference type="PDB" id="7QSM">
    <property type="method" value="EM"/>
    <property type="resolution" value="2.30 A"/>
    <property type="chains" value="S=1-99"/>
</dbReference>
<dbReference type="PDB" id="7QSN">
    <property type="method" value="EM"/>
    <property type="resolution" value="2.81 A"/>
    <property type="chains" value="S=1-99"/>
</dbReference>
<dbReference type="PDB" id="7QSO">
    <property type="method" value="EM"/>
    <property type="resolution" value="3.02 A"/>
    <property type="chains" value="S=1-99"/>
</dbReference>
<dbReference type="PDB" id="7R41">
    <property type="method" value="EM"/>
    <property type="resolution" value="2.30 A"/>
    <property type="chains" value="S=1-99"/>
</dbReference>
<dbReference type="PDB" id="7R42">
    <property type="method" value="EM"/>
    <property type="resolution" value="2.30 A"/>
    <property type="chains" value="S=1-99"/>
</dbReference>
<dbReference type="PDB" id="7R43">
    <property type="method" value="EM"/>
    <property type="resolution" value="2.40 A"/>
    <property type="chains" value="S=1-99"/>
</dbReference>
<dbReference type="PDB" id="7R44">
    <property type="method" value="EM"/>
    <property type="resolution" value="2.40 A"/>
    <property type="chains" value="S=1-99"/>
</dbReference>
<dbReference type="PDB" id="7R45">
    <property type="method" value="EM"/>
    <property type="resolution" value="2.40 A"/>
    <property type="chains" value="S=1-99"/>
</dbReference>
<dbReference type="PDB" id="7R46">
    <property type="method" value="EM"/>
    <property type="resolution" value="2.40 A"/>
    <property type="chains" value="S=1-99"/>
</dbReference>
<dbReference type="PDB" id="7R47">
    <property type="method" value="EM"/>
    <property type="resolution" value="2.30 A"/>
    <property type="chains" value="S=1-99"/>
</dbReference>
<dbReference type="PDB" id="7R48">
    <property type="method" value="EM"/>
    <property type="resolution" value="2.30 A"/>
    <property type="chains" value="S=1-99"/>
</dbReference>
<dbReference type="PDB" id="7R4C">
    <property type="method" value="EM"/>
    <property type="resolution" value="2.30 A"/>
    <property type="chains" value="S=1-99"/>
</dbReference>
<dbReference type="PDB" id="7R4D">
    <property type="method" value="EM"/>
    <property type="resolution" value="2.30 A"/>
    <property type="chains" value="S=1-99"/>
</dbReference>
<dbReference type="PDB" id="7R4F">
    <property type="method" value="EM"/>
    <property type="resolution" value="2.40 A"/>
    <property type="chains" value="S=1-99"/>
</dbReference>
<dbReference type="PDB" id="7R4G">
    <property type="method" value="EM"/>
    <property type="resolution" value="2.50 A"/>
    <property type="chains" value="S=1-99"/>
</dbReference>
<dbReference type="PDB" id="8Q0A">
    <property type="method" value="EM"/>
    <property type="resolution" value="3.10 A"/>
    <property type="chains" value="S=1-99"/>
</dbReference>
<dbReference type="PDB" id="8Q0F">
    <property type="method" value="EM"/>
    <property type="resolution" value="3.10 A"/>
    <property type="chains" value="S=1-99"/>
</dbReference>
<dbReference type="PDB" id="8Q0J">
    <property type="method" value="EM"/>
    <property type="resolution" value="3.80 A"/>
    <property type="chains" value="S=1-99"/>
</dbReference>
<dbReference type="PDB" id="8Q0M">
    <property type="method" value="EM"/>
    <property type="resolution" value="3.10 A"/>
    <property type="chains" value="S=1-99"/>
</dbReference>
<dbReference type="PDB" id="8Q0O">
    <property type="method" value="EM"/>
    <property type="resolution" value="3.10 A"/>
    <property type="chains" value="S=1-99"/>
</dbReference>
<dbReference type="PDB" id="8Q0Q">
    <property type="method" value="EM"/>
    <property type="resolution" value="3.60 A"/>
    <property type="chains" value="S=1-99"/>
</dbReference>
<dbReference type="PDB" id="8Q1P">
    <property type="method" value="EM"/>
    <property type="resolution" value="2.90 A"/>
    <property type="chains" value="S=1-99"/>
</dbReference>
<dbReference type="PDB" id="8Q1U">
    <property type="method" value="EM"/>
    <property type="resolution" value="3.30 A"/>
    <property type="chains" value="S=1-99"/>
</dbReference>
<dbReference type="PDB" id="8Q1Y">
    <property type="method" value="EM"/>
    <property type="resolution" value="2.60 A"/>
    <property type="chains" value="S=1-99"/>
</dbReference>
<dbReference type="PDB" id="8Q25">
    <property type="method" value="EM"/>
    <property type="resolution" value="2.80 A"/>
    <property type="chains" value="S=1-99"/>
</dbReference>
<dbReference type="PDB" id="8Q45">
    <property type="method" value="EM"/>
    <property type="resolution" value="2.70 A"/>
    <property type="chains" value="S=1-99"/>
</dbReference>
<dbReference type="PDB" id="8Q46">
    <property type="method" value="EM"/>
    <property type="resolution" value="2.60 A"/>
    <property type="chains" value="S=1-99"/>
</dbReference>
<dbReference type="PDB" id="8Q47">
    <property type="method" value="EM"/>
    <property type="resolution" value="2.90 A"/>
    <property type="chains" value="S=1-99"/>
</dbReference>
<dbReference type="PDB" id="8Q48">
    <property type="method" value="EM"/>
    <property type="resolution" value="2.50 A"/>
    <property type="chains" value="S=1-99"/>
</dbReference>
<dbReference type="PDB" id="8Q49">
    <property type="method" value="EM"/>
    <property type="resolution" value="2.60 A"/>
    <property type="chains" value="S=1-99"/>
</dbReference>
<dbReference type="PDB" id="8Q4A">
    <property type="method" value="EM"/>
    <property type="resolution" value="2.60 A"/>
    <property type="chains" value="S=1-99"/>
</dbReference>
<dbReference type="PDBsum" id="5LC5"/>
<dbReference type="PDBsum" id="5LDW"/>
<dbReference type="PDBsum" id="5LDX"/>
<dbReference type="PDBsum" id="5O31"/>
<dbReference type="PDBsum" id="7DGQ"/>
<dbReference type="PDBsum" id="7DGR"/>
<dbReference type="PDBsum" id="7DGS"/>
<dbReference type="PDBsum" id="7DGZ"/>
<dbReference type="PDBsum" id="7DH0"/>
<dbReference type="PDBsum" id="7DKF"/>
<dbReference type="PDBsum" id="7QSD"/>
<dbReference type="PDBsum" id="7QSK"/>
<dbReference type="PDBsum" id="7QSL"/>
<dbReference type="PDBsum" id="7QSM"/>
<dbReference type="PDBsum" id="7QSN"/>
<dbReference type="PDBsum" id="7QSO"/>
<dbReference type="PDBsum" id="7R41"/>
<dbReference type="PDBsum" id="7R42"/>
<dbReference type="PDBsum" id="7R43"/>
<dbReference type="PDBsum" id="7R44"/>
<dbReference type="PDBsum" id="7R45"/>
<dbReference type="PDBsum" id="7R46"/>
<dbReference type="PDBsum" id="7R47"/>
<dbReference type="PDBsum" id="7R48"/>
<dbReference type="PDBsum" id="7R4C"/>
<dbReference type="PDBsum" id="7R4D"/>
<dbReference type="PDBsum" id="7R4F"/>
<dbReference type="PDBsum" id="7R4G"/>
<dbReference type="PDBsum" id="8Q0A"/>
<dbReference type="PDBsum" id="8Q0F"/>
<dbReference type="PDBsum" id="8Q0J"/>
<dbReference type="PDBsum" id="8Q0M"/>
<dbReference type="PDBsum" id="8Q0O"/>
<dbReference type="PDBsum" id="8Q0Q"/>
<dbReference type="PDBsum" id="8Q1P"/>
<dbReference type="PDBsum" id="8Q1U"/>
<dbReference type="PDBsum" id="8Q1Y"/>
<dbReference type="PDBsum" id="8Q25"/>
<dbReference type="PDBsum" id="8Q45"/>
<dbReference type="PDBsum" id="8Q46"/>
<dbReference type="PDBsum" id="8Q47"/>
<dbReference type="PDBsum" id="8Q48"/>
<dbReference type="PDBsum" id="8Q49"/>
<dbReference type="PDBsum" id="8Q4A"/>
<dbReference type="EMDB" id="EMD-18051"/>
<dbReference type="EMDB" id="EMD-18052"/>
<dbReference type="EMDB" id="EMD-18054"/>
<dbReference type="EMDB" id="EMD-18055"/>
<dbReference type="EMDB" id="EMD-18057"/>
<dbReference type="EMDB" id="EMD-18059"/>
<dbReference type="EMDB" id="EMD-18066"/>
<dbReference type="EMDB" id="EMD-18067"/>
<dbReference type="EMDB" id="EMD-18068"/>
<dbReference type="EMDB" id="EMD-18069"/>
<dbReference type="EMDB" id="EMD-18138"/>
<dbReference type="EMDB" id="EMD-18139"/>
<dbReference type="EMDB" id="EMD-18140"/>
<dbReference type="EMDB" id="EMD-18141"/>
<dbReference type="EMDB" id="EMD-18142"/>
<dbReference type="EMDB" id="EMD-18143"/>
<dbReference type="EMDB" id="EMD-30673"/>
<dbReference type="EMDB" id="EMD-30676"/>
<dbReference type="EMDB" id="EMD-3731"/>
<dbReference type="EMDB" id="EMD-4032"/>
<dbReference type="EMDB" id="EMD-4040"/>
<dbReference type="EMDB" id="EMD-4041"/>
<dbReference type="SMR" id="Q02370"/>
<dbReference type="CORUM" id="Q02370"/>
<dbReference type="DIP" id="DIP-38834N"/>
<dbReference type="FunCoup" id="Q02370">
    <property type="interactions" value="2404"/>
</dbReference>
<dbReference type="IntAct" id="Q02370">
    <property type="interactions" value="18"/>
</dbReference>
<dbReference type="STRING" id="9913.ENSBTAP00000020018"/>
<dbReference type="TCDB" id="3.D.1.6.1">
    <property type="family name" value="the h+ or na+-translocating nadh dehydrogenase (ndh) family"/>
</dbReference>
<dbReference type="GlyGen" id="Q02370">
    <property type="glycosylation" value="1 site, 1 O-linked glycan (1 site)"/>
</dbReference>
<dbReference type="PaxDb" id="9913-ENSBTAP00000020018"/>
<dbReference type="Ensembl" id="ENSBTAT00000020018.2">
    <property type="protein sequence ID" value="ENSBTAP00000020018.1"/>
    <property type="gene ID" value="ENSBTAG00000015041.3"/>
</dbReference>
<dbReference type="GeneID" id="327698"/>
<dbReference type="KEGG" id="bta:327698"/>
<dbReference type="CTD" id="4695"/>
<dbReference type="VEuPathDB" id="HostDB:ENSBTAG00000015041"/>
<dbReference type="eggNOG" id="KOG3446">
    <property type="taxonomic scope" value="Eukaryota"/>
</dbReference>
<dbReference type="GeneTree" id="ENSGT00390000006178"/>
<dbReference type="HOGENOM" id="CLU_110897_0_0_1"/>
<dbReference type="InParanoid" id="Q02370"/>
<dbReference type="OMA" id="FIEQQYV"/>
<dbReference type="OrthoDB" id="10250268at2759"/>
<dbReference type="TreeFam" id="TF300229"/>
<dbReference type="Reactome" id="R-BTA-611105">
    <property type="pathway name" value="Respiratory electron transport"/>
</dbReference>
<dbReference type="Reactome" id="R-BTA-6799198">
    <property type="pathway name" value="Complex I biogenesis"/>
</dbReference>
<dbReference type="Reactome" id="R-BTA-9837999">
    <property type="pathway name" value="Mitochondrial protein degradation"/>
</dbReference>
<dbReference type="Proteomes" id="UP000009136">
    <property type="component" value="Chromosome 7"/>
</dbReference>
<dbReference type="Bgee" id="ENSBTAG00000015041">
    <property type="expression patterns" value="Expressed in oocyte and 108 other cell types or tissues"/>
</dbReference>
<dbReference type="GO" id="GO:0005743">
    <property type="term" value="C:mitochondrial inner membrane"/>
    <property type="evidence" value="ECO:0007669"/>
    <property type="project" value="UniProtKB-SubCell"/>
</dbReference>
<dbReference type="GO" id="GO:0031966">
    <property type="term" value="C:mitochondrial membrane"/>
    <property type="evidence" value="ECO:0000250"/>
    <property type="project" value="AgBase"/>
</dbReference>
<dbReference type="GO" id="GO:0005739">
    <property type="term" value="C:mitochondrion"/>
    <property type="evidence" value="ECO:0000305"/>
    <property type="project" value="UniProtKB"/>
</dbReference>
<dbReference type="GO" id="GO:0045271">
    <property type="term" value="C:respiratory chain complex I"/>
    <property type="evidence" value="ECO:0000314"/>
    <property type="project" value="UniProtKB"/>
</dbReference>
<dbReference type="FunFam" id="3.40.30.10:FF:000127">
    <property type="entry name" value="NADH dehydrogenase [ubiquinone] 1 alpha subcomplex subunit 2"/>
    <property type="match status" value="1"/>
</dbReference>
<dbReference type="Gene3D" id="3.40.30.10">
    <property type="entry name" value="Glutaredoxin"/>
    <property type="match status" value="1"/>
</dbReference>
<dbReference type="InterPro" id="IPR016464">
    <property type="entry name" value="NADH_Ub_cplx-1_asu_su-2"/>
</dbReference>
<dbReference type="InterPro" id="IPR007741">
    <property type="entry name" value="Ribosomal_mL43/mS25/NADH_DH"/>
</dbReference>
<dbReference type="InterPro" id="IPR036249">
    <property type="entry name" value="Thioredoxin-like_sf"/>
</dbReference>
<dbReference type="PANTHER" id="PTHR12878:SF0">
    <property type="entry name" value="NADH DEHYDROGENASE [UBIQUINONE] 1 ALPHA SUBCOMPLEX SUBUNIT 2"/>
    <property type="match status" value="1"/>
</dbReference>
<dbReference type="PANTHER" id="PTHR12878">
    <property type="entry name" value="NADH-UBIQUINONE OXIDOREDUCTASE B8 SUBUNIT"/>
    <property type="match status" value="1"/>
</dbReference>
<dbReference type="Pfam" id="PF05047">
    <property type="entry name" value="L51_S25_CI-B8"/>
    <property type="match status" value="1"/>
</dbReference>
<dbReference type="PIRSF" id="PIRSF005822">
    <property type="entry name" value="NDUA2"/>
    <property type="match status" value="1"/>
</dbReference>
<dbReference type="SMART" id="SM00916">
    <property type="entry name" value="L51_S25_CI-B8"/>
    <property type="match status" value="1"/>
</dbReference>
<dbReference type="SUPFAM" id="SSF52833">
    <property type="entry name" value="Thioredoxin-like"/>
    <property type="match status" value="1"/>
</dbReference>
<comment type="function">
    <text evidence="2">Accessory subunit of the mitochondrial membrane respiratory chain NADH dehydrogenase (Complex I), that is believed not to be involved in catalysis. Complex I functions in the transfer of electrons from NADH to the respiratory chain. The immediate electron acceptor for the enzyme is believed to be ubiquinone.</text>
</comment>
<comment type="subunit">
    <text evidence="4 5">Complex I is composed of 45 different subunits.</text>
</comment>
<comment type="subcellular location">
    <subcellularLocation>
        <location evidence="7 8">Mitochondrion inner membrane</location>
        <topology evidence="6">Peripheral membrane protein</topology>
        <orientation evidence="6">Matrix side</orientation>
    </subcellularLocation>
</comment>
<comment type="similarity">
    <text evidence="6">Belongs to the complex I NDUFA2 subunit family.</text>
</comment>
<accession>Q02370</accession>
<accession>Q148D8</accession>
<accession>Q2VYC4</accession>